<evidence type="ECO:0000250" key="1"/>
<evidence type="ECO:0000255" key="2"/>
<evidence type="ECO:0000255" key="3">
    <source>
        <dbReference type="PROSITE-ProRule" id="PRU00498"/>
    </source>
</evidence>
<evidence type="ECO:0000256" key="4">
    <source>
        <dbReference type="SAM" id="MobiDB-lite"/>
    </source>
</evidence>
<evidence type="ECO:0000269" key="5">
    <source>
    </source>
</evidence>
<evidence type="ECO:0000305" key="6"/>
<feature type="signal peptide" evidence="2">
    <location>
        <begin position="1"/>
        <end position="21"/>
    </location>
</feature>
<feature type="chain" id="PRO_5000539264" description="CLAVATA3/ESR (CLE)-related protein 4C" evidence="2">
    <location>
        <begin position="22"/>
        <end position="147"/>
    </location>
</feature>
<feature type="region of interest" description="Required for secretion from the host cytoplasm to the host apoplasm" evidence="1">
    <location>
        <begin position="21"/>
        <end position="83"/>
    </location>
</feature>
<feature type="region of interest" description="Disordered" evidence="4">
    <location>
        <begin position="57"/>
        <end position="86"/>
    </location>
</feature>
<feature type="region of interest" description="Disordered" evidence="4">
    <location>
        <begin position="116"/>
        <end position="147"/>
    </location>
</feature>
<feature type="short sequence motif" description="CLE">
    <location>
        <begin position="136"/>
        <end position="147"/>
    </location>
</feature>
<feature type="compositionally biased region" description="Basic and acidic residues" evidence="4">
    <location>
        <begin position="125"/>
        <end position="137"/>
    </location>
</feature>
<feature type="glycosylation site" description="N-linked (GlcNAc...) asparagine" evidence="3">
    <location>
        <position position="32"/>
    </location>
</feature>
<accession>D1FNK4</accession>
<proteinExistence type="evidence at transcript level"/>
<gene>
    <name type="primary">CLE-4C</name>
</gene>
<sequence>MATNTMLCLFVISVVLALAFATNKKGDEEPENHSTGIFGKVGRVVTVALAMSSRLGGADATRGGGAVYGGNLKSNQLPNNNWMAPPPPMAIRSAKVYDSKHSPAEYLKKFAQDFRRKTGMHSQRHHEETTLEQEKRVAGAGPDPIHH</sequence>
<reference key="1">
    <citation type="journal article" date="2009" name="Mol. Plant Microbe Interact.">
        <title>Structural and functional diversity of CLAVATA3/ESR (CLE)-like genes from the potato cyst nematode Globodera rostochiensis.</title>
        <authorList>
            <person name="Lu S.-W."/>
            <person name="Chen S."/>
            <person name="Wang J."/>
            <person name="Yu H."/>
            <person name="Chronis D."/>
            <person name="Mitchum M.G."/>
            <person name="Wang X."/>
        </authorList>
    </citation>
    <scope>NUCLEOTIDE SEQUENCE [GENOMIC DNA / MRNA]</scope>
    <scope>FUNCTION</scope>
    <scope>TISSUE SPECIFICITY</scope>
    <scope>DEVELOPMENTAL STAGE</scope>
</reference>
<name>CLE4C_GLORO</name>
<keyword id="KW-0052">Apoplast</keyword>
<keyword id="KW-0221">Differentiation</keyword>
<keyword id="KW-0325">Glycoprotein</keyword>
<keyword id="KW-1035">Host cytoplasm</keyword>
<keyword id="KW-1185">Reference proteome</keyword>
<keyword id="KW-0964">Secreted</keyword>
<keyword id="KW-0732">Signal</keyword>
<protein>
    <recommendedName>
        <fullName>CLAVATA3/ESR (CLE)-related protein 4C</fullName>
    </recommendedName>
</protein>
<organism>
    <name type="scientific">Globodera rostochiensis</name>
    <name type="common">Golden nematode worm</name>
    <name type="synonym">Heterodera rostochiensis</name>
    <dbReference type="NCBI Taxonomy" id="31243"/>
    <lineage>
        <taxon>Eukaryota</taxon>
        <taxon>Metazoa</taxon>
        <taxon>Ecdysozoa</taxon>
        <taxon>Nematoda</taxon>
        <taxon>Chromadorea</taxon>
        <taxon>Rhabditida</taxon>
        <taxon>Tylenchina</taxon>
        <taxon>Tylenchomorpha</taxon>
        <taxon>Tylenchoidea</taxon>
        <taxon>Heteroderidae</taxon>
        <taxon>Heteroderinae</taxon>
        <taxon>Globodera</taxon>
    </lineage>
</organism>
<dbReference type="EMBL" id="EU386836">
    <property type="protein sequence ID" value="ACY70455.1"/>
    <property type="molecule type" value="mRNA"/>
</dbReference>
<dbReference type="EMBL" id="EU386843">
    <property type="protein sequence ID" value="ACY70462.1"/>
    <property type="molecule type" value="Genomic_DNA"/>
</dbReference>
<dbReference type="SMR" id="D1FNK4"/>
<dbReference type="GlyCosmos" id="D1FNK4">
    <property type="glycosylation" value="1 site, No reported glycans"/>
</dbReference>
<dbReference type="Proteomes" id="UP000887572">
    <property type="component" value="Unplaced"/>
</dbReference>
<dbReference type="GO" id="GO:0005576">
    <property type="term" value="C:extracellular region"/>
    <property type="evidence" value="ECO:0007669"/>
    <property type="project" value="UniProtKB-SubCell"/>
</dbReference>
<dbReference type="GO" id="GO:0030430">
    <property type="term" value="C:host cell cytoplasm"/>
    <property type="evidence" value="ECO:0007669"/>
    <property type="project" value="UniProtKB-SubCell"/>
</dbReference>
<dbReference type="GO" id="GO:0043655">
    <property type="term" value="C:host extracellular space"/>
    <property type="evidence" value="ECO:0007669"/>
    <property type="project" value="UniProtKB-SubCell"/>
</dbReference>
<dbReference type="GO" id="GO:0030154">
    <property type="term" value="P:cell differentiation"/>
    <property type="evidence" value="ECO:0007669"/>
    <property type="project" value="UniProtKB-KW"/>
</dbReference>
<comment type="function">
    <text evidence="5">Mimics host plant CLE extracellular signal peptides that regulate cell fate. May play a role in the differentiation or division of feeding cells (syncytia) induced in plant roots during infection.</text>
</comment>
<comment type="subcellular location">
    <subcellularLocation>
        <location evidence="1">Secreted</location>
    </subcellularLocation>
    <subcellularLocation>
        <location evidence="1">Host cytoplasm</location>
    </subcellularLocation>
    <subcellularLocation>
        <location evidence="1">Host extracellular space</location>
    </subcellularLocation>
    <subcellularLocation>
        <location evidence="1">Secreted</location>
        <location evidence="1">Extracellular space</location>
        <location evidence="1">Apoplast</location>
    </subcellularLocation>
    <text evidence="1">Present in secretory granules within the dorsal esophageal gland secretory cell and in the dorsal gland ampulla (collecting reservoir) at the base of the nematode stylet. Secreted into host root cells via the nematode stylet to transform the recipient cells into enlarged multinucleate feeding cells called giant-cells or syncytia. Secreted to the host apoplasm from its cytoplasm via a plant secretory pathway (By similarity).</text>
</comment>
<comment type="tissue specificity">
    <text evidence="5">Highly expressed exclusively within the dorsal esophageal gland cell during syncytium formation in host plants.</text>
</comment>
<comment type="developmental stage">
    <text evidence="5">Strongly up-regulated during root colonization, from the onset of syncytium formation by parasitic second-stage juveniles (pJ2) through the J3?J4 molts of sedentary life stages that become adult females.</text>
</comment>
<comment type="similarity">
    <text evidence="6">Belongs to the CLV3/ESR signal peptide family.</text>
</comment>